<keyword id="KW-0067">ATP-binding</keyword>
<keyword id="KW-0131">Cell cycle</keyword>
<keyword id="KW-0132">Cell division</keyword>
<keyword id="KW-0133">Cell shape</keyword>
<keyword id="KW-0961">Cell wall biogenesis/degradation</keyword>
<keyword id="KW-0963">Cytoplasm</keyword>
<keyword id="KW-0436">Ligase</keyword>
<keyword id="KW-0547">Nucleotide-binding</keyword>
<keyword id="KW-0573">Peptidoglycan synthesis</keyword>
<keyword id="KW-1185">Reference proteome</keyword>
<reference key="1">
    <citation type="submission" date="2006-10" db="EMBL/GenBank/DDBJ databases">
        <authorList>
            <person name="Fleischmann R.D."/>
            <person name="Dodson R.J."/>
            <person name="Haft D.H."/>
            <person name="Merkel J.S."/>
            <person name="Nelson W.C."/>
            <person name="Fraser C.M."/>
        </authorList>
    </citation>
    <scope>NUCLEOTIDE SEQUENCE [LARGE SCALE GENOMIC DNA]</scope>
    <source>
        <strain>ATCC 700084 / mc(2)155</strain>
    </source>
</reference>
<reference key="2">
    <citation type="journal article" date="2007" name="Genome Biol.">
        <title>Interrupted coding sequences in Mycobacterium smegmatis: authentic mutations or sequencing errors?</title>
        <authorList>
            <person name="Deshayes C."/>
            <person name="Perrodou E."/>
            <person name="Gallien S."/>
            <person name="Euphrasie D."/>
            <person name="Schaeffer C."/>
            <person name="Van-Dorsselaer A."/>
            <person name="Poch O."/>
            <person name="Lecompte O."/>
            <person name="Reyrat J.-M."/>
        </authorList>
    </citation>
    <scope>NUCLEOTIDE SEQUENCE [LARGE SCALE GENOMIC DNA]</scope>
    <source>
        <strain>ATCC 700084 / mc(2)155</strain>
    </source>
</reference>
<reference key="3">
    <citation type="journal article" date="2009" name="Genome Res.">
        <title>Ortho-proteogenomics: multiple proteomes investigation through orthology and a new MS-based protocol.</title>
        <authorList>
            <person name="Gallien S."/>
            <person name="Perrodou E."/>
            <person name="Carapito C."/>
            <person name="Deshayes C."/>
            <person name="Reyrat J.-M."/>
            <person name="Van Dorsselaer A."/>
            <person name="Poch O."/>
            <person name="Schaeffer C."/>
            <person name="Lecompte O."/>
        </authorList>
    </citation>
    <scope>NUCLEOTIDE SEQUENCE [LARGE SCALE GENOMIC DNA]</scope>
    <source>
        <strain>ATCC 700084 / mc(2)155</strain>
    </source>
</reference>
<sequence length="493" mass="49558">MPDVTGDLAPLTPGARVLVTGAGITGRAVLGALAPLEVAATLCDDNADALAALAAKGVAVIAPGDAIASIGDYALVVTSPGFAPSAPVLAAAAAAGVPIWGDVELAWRLDAAGRYGPPRRWLVVTGTNGKTTTTSMLHDMLVAGGRRSVLCGNIGDPVLAVLDQPAELLAVELSSFQLHWAPSLRPEAGVVLNVAEDHLDWHGSMAAYARDKARVLDGRVAVVGLDDPVAAGLLPTAAATVRVGFRLGDPAAGELGVRDGKLIDRAFDDGVELADCADIGVAGPIGVLDALGAAALARAVGVAPGAIGAALASFQVGRHRAEVVGTVDGVVFIDDSKATNPHAAQASITAYDRVVWVAGGLLKGASVDELVRQVANRLAGAVLIGRDRQMVADALSRHAPDVPVVELVAGEDSGVLGTNESIESVGDHVTRVIEVGGRPVSDAVMSAVVSAARDLASPGDTVLLAPAGASFDQFSGYGQRGDAFAAAVRAAVG</sequence>
<feature type="chain" id="PRO_0000301439" description="UDP-N-acetylmuramoylalanine--D-glutamate ligase">
    <location>
        <begin position="1"/>
        <end position="493"/>
    </location>
</feature>
<feature type="binding site" evidence="1">
    <location>
        <begin position="126"/>
        <end position="132"/>
    </location>
    <ligand>
        <name>ATP</name>
        <dbReference type="ChEBI" id="CHEBI:30616"/>
    </ligand>
</feature>
<organism>
    <name type="scientific">Mycolicibacterium smegmatis (strain ATCC 700084 / mc(2)155)</name>
    <name type="common">Mycobacterium smegmatis</name>
    <dbReference type="NCBI Taxonomy" id="246196"/>
    <lineage>
        <taxon>Bacteria</taxon>
        <taxon>Bacillati</taxon>
        <taxon>Actinomycetota</taxon>
        <taxon>Actinomycetes</taxon>
        <taxon>Mycobacteriales</taxon>
        <taxon>Mycobacteriaceae</taxon>
        <taxon>Mycolicibacterium</taxon>
    </lineage>
</organism>
<gene>
    <name evidence="1" type="primary">murD</name>
    <name type="ordered locus">MSMEG_4229</name>
    <name type="ordered locus">MSMEI_4129</name>
</gene>
<comment type="function">
    <text evidence="1">Cell wall formation. Catalyzes the addition of glutamate to the nucleotide precursor UDP-N-acetylmuramoyl-L-alanine (UMA).</text>
</comment>
<comment type="catalytic activity">
    <reaction evidence="1">
        <text>UDP-N-acetyl-alpha-D-muramoyl-L-alanine + D-glutamate + ATP = UDP-N-acetyl-alpha-D-muramoyl-L-alanyl-D-glutamate + ADP + phosphate + H(+)</text>
        <dbReference type="Rhea" id="RHEA:16429"/>
        <dbReference type="ChEBI" id="CHEBI:15378"/>
        <dbReference type="ChEBI" id="CHEBI:29986"/>
        <dbReference type="ChEBI" id="CHEBI:30616"/>
        <dbReference type="ChEBI" id="CHEBI:43474"/>
        <dbReference type="ChEBI" id="CHEBI:83898"/>
        <dbReference type="ChEBI" id="CHEBI:83900"/>
        <dbReference type="ChEBI" id="CHEBI:456216"/>
        <dbReference type="EC" id="6.3.2.9"/>
    </reaction>
</comment>
<comment type="pathway">
    <text evidence="1">Cell wall biogenesis; peptidoglycan biosynthesis.</text>
</comment>
<comment type="subcellular location">
    <subcellularLocation>
        <location evidence="1">Cytoplasm</location>
    </subcellularLocation>
</comment>
<comment type="similarity">
    <text evidence="1">Belongs to the MurCDEF family.</text>
</comment>
<dbReference type="EC" id="6.3.2.9" evidence="1"/>
<dbReference type="EMBL" id="CP000480">
    <property type="protein sequence ID" value="ABK72327.1"/>
    <property type="molecule type" value="Genomic_DNA"/>
</dbReference>
<dbReference type="EMBL" id="CP001663">
    <property type="protein sequence ID" value="AFP40586.1"/>
    <property type="molecule type" value="Genomic_DNA"/>
</dbReference>
<dbReference type="RefSeq" id="WP_011729658.1">
    <property type="nucleotide sequence ID" value="NZ_SIJM01000003.1"/>
</dbReference>
<dbReference type="RefSeq" id="YP_888506.1">
    <property type="nucleotide sequence ID" value="NC_008596.1"/>
</dbReference>
<dbReference type="SMR" id="A0R018"/>
<dbReference type="STRING" id="246196.MSMEG_4229"/>
<dbReference type="PaxDb" id="246196-MSMEI_4129"/>
<dbReference type="KEGG" id="msb:LJ00_20965"/>
<dbReference type="KEGG" id="msg:MSMEI_4129"/>
<dbReference type="KEGG" id="msm:MSMEG_4229"/>
<dbReference type="PATRIC" id="fig|246196.19.peg.4149"/>
<dbReference type="eggNOG" id="COG0771">
    <property type="taxonomic scope" value="Bacteria"/>
</dbReference>
<dbReference type="OrthoDB" id="9809796at2"/>
<dbReference type="UniPathway" id="UPA00219"/>
<dbReference type="Proteomes" id="UP000000757">
    <property type="component" value="Chromosome"/>
</dbReference>
<dbReference type="Proteomes" id="UP000006158">
    <property type="component" value="Chromosome"/>
</dbReference>
<dbReference type="GO" id="GO:0005737">
    <property type="term" value="C:cytoplasm"/>
    <property type="evidence" value="ECO:0007669"/>
    <property type="project" value="UniProtKB-SubCell"/>
</dbReference>
<dbReference type="GO" id="GO:0005524">
    <property type="term" value="F:ATP binding"/>
    <property type="evidence" value="ECO:0007669"/>
    <property type="project" value="UniProtKB-UniRule"/>
</dbReference>
<dbReference type="GO" id="GO:0008764">
    <property type="term" value="F:UDP-N-acetylmuramoylalanine-D-glutamate ligase activity"/>
    <property type="evidence" value="ECO:0007669"/>
    <property type="project" value="UniProtKB-UniRule"/>
</dbReference>
<dbReference type="GO" id="GO:0051301">
    <property type="term" value="P:cell division"/>
    <property type="evidence" value="ECO:0007669"/>
    <property type="project" value="UniProtKB-KW"/>
</dbReference>
<dbReference type="GO" id="GO:0071555">
    <property type="term" value="P:cell wall organization"/>
    <property type="evidence" value="ECO:0007669"/>
    <property type="project" value="UniProtKB-KW"/>
</dbReference>
<dbReference type="GO" id="GO:0009252">
    <property type="term" value="P:peptidoglycan biosynthetic process"/>
    <property type="evidence" value="ECO:0007669"/>
    <property type="project" value="UniProtKB-UniRule"/>
</dbReference>
<dbReference type="GO" id="GO:0008360">
    <property type="term" value="P:regulation of cell shape"/>
    <property type="evidence" value="ECO:0007669"/>
    <property type="project" value="UniProtKB-KW"/>
</dbReference>
<dbReference type="Gene3D" id="3.90.190.20">
    <property type="entry name" value="Mur ligase, C-terminal domain"/>
    <property type="match status" value="1"/>
</dbReference>
<dbReference type="Gene3D" id="3.40.1190.10">
    <property type="entry name" value="Mur-like, catalytic domain"/>
    <property type="match status" value="1"/>
</dbReference>
<dbReference type="Gene3D" id="3.40.50.720">
    <property type="entry name" value="NAD(P)-binding Rossmann-like Domain"/>
    <property type="match status" value="1"/>
</dbReference>
<dbReference type="HAMAP" id="MF_00639">
    <property type="entry name" value="MurD"/>
    <property type="match status" value="1"/>
</dbReference>
<dbReference type="InterPro" id="IPR036565">
    <property type="entry name" value="Mur-like_cat_sf"/>
</dbReference>
<dbReference type="InterPro" id="IPR004101">
    <property type="entry name" value="Mur_ligase_C"/>
</dbReference>
<dbReference type="InterPro" id="IPR036615">
    <property type="entry name" value="Mur_ligase_C_dom_sf"/>
</dbReference>
<dbReference type="InterPro" id="IPR013221">
    <property type="entry name" value="Mur_ligase_cen"/>
</dbReference>
<dbReference type="InterPro" id="IPR005762">
    <property type="entry name" value="MurD"/>
</dbReference>
<dbReference type="NCBIfam" id="TIGR01087">
    <property type="entry name" value="murD"/>
    <property type="match status" value="1"/>
</dbReference>
<dbReference type="PANTHER" id="PTHR43692">
    <property type="entry name" value="UDP-N-ACETYLMURAMOYLALANINE--D-GLUTAMATE LIGASE"/>
    <property type="match status" value="1"/>
</dbReference>
<dbReference type="PANTHER" id="PTHR43692:SF1">
    <property type="entry name" value="UDP-N-ACETYLMURAMOYLALANINE--D-GLUTAMATE LIGASE"/>
    <property type="match status" value="1"/>
</dbReference>
<dbReference type="Pfam" id="PF02875">
    <property type="entry name" value="Mur_ligase_C"/>
    <property type="match status" value="1"/>
</dbReference>
<dbReference type="Pfam" id="PF08245">
    <property type="entry name" value="Mur_ligase_M"/>
    <property type="match status" value="1"/>
</dbReference>
<dbReference type="Pfam" id="PF21799">
    <property type="entry name" value="MurD-like_N"/>
    <property type="match status" value="1"/>
</dbReference>
<dbReference type="SUPFAM" id="SSF51984">
    <property type="entry name" value="MurCD N-terminal domain"/>
    <property type="match status" value="1"/>
</dbReference>
<dbReference type="SUPFAM" id="SSF53623">
    <property type="entry name" value="MurD-like peptide ligases, catalytic domain"/>
    <property type="match status" value="1"/>
</dbReference>
<dbReference type="SUPFAM" id="SSF53244">
    <property type="entry name" value="MurD-like peptide ligases, peptide-binding domain"/>
    <property type="match status" value="2"/>
</dbReference>
<evidence type="ECO:0000255" key="1">
    <source>
        <dbReference type="HAMAP-Rule" id="MF_00639"/>
    </source>
</evidence>
<protein>
    <recommendedName>
        <fullName evidence="1">UDP-N-acetylmuramoylalanine--D-glutamate ligase</fullName>
        <ecNumber evidence="1">6.3.2.9</ecNumber>
    </recommendedName>
    <alternativeName>
        <fullName evidence="1">D-glutamic acid-adding enzyme</fullName>
    </alternativeName>
    <alternativeName>
        <fullName evidence="1">UDP-N-acetylmuramoyl-L-alanyl-D-glutamate synthetase</fullName>
    </alternativeName>
</protein>
<accession>A0R018</accession>
<accession>I7GBM9</accession>
<proteinExistence type="inferred from homology"/>
<name>MURD_MYCS2</name>